<protein>
    <recommendedName>
        <fullName>Ribosome-inactivating protein charantin</fullName>
        <ecNumber>3.2.2.22</ecNumber>
    </recommendedName>
    <alternativeName>
        <fullName>rRNA N-glycosidase</fullName>
    </alternativeName>
</protein>
<name>CHAR_MOMCH</name>
<comment type="function">
    <text evidence="1">Inhibits cell-free translation in a rabbit reticulocyte lysate system.</text>
</comment>
<comment type="catalytic activity">
    <reaction evidence="1">
        <text>Endohydrolysis of the N-glycosidic bond at one specific adenosine on the 28S rRNA.</text>
        <dbReference type="EC" id="3.2.2.22"/>
    </reaction>
</comment>
<comment type="subunit">
    <text evidence="3">Monomer.</text>
</comment>
<comment type="miscellaneous">
    <text>IC(50) of translation-inhibiting activity is of 400 nM.</text>
</comment>
<feature type="chain" id="PRO_0000221424" description="Ribosome-inactivating protein charantin">
    <location>
        <begin position="1"/>
        <end position="25" status="greater than"/>
    </location>
</feature>
<feature type="non-terminal residue" evidence="2">
    <location>
        <position position="25"/>
    </location>
</feature>
<keyword id="KW-0903">Direct protein sequencing</keyword>
<keyword id="KW-0326">Glycosidase</keyword>
<keyword id="KW-0378">Hydrolase</keyword>
<keyword id="KW-0652">Protein synthesis inhibitor</keyword>
<keyword id="KW-1185">Reference proteome</keyword>
<keyword id="KW-0800">Toxin</keyword>
<organism>
    <name type="scientific">Momordica charantia</name>
    <name type="common">Bitter gourd</name>
    <name type="synonym">Balsam pear</name>
    <dbReference type="NCBI Taxonomy" id="3673"/>
    <lineage>
        <taxon>Eukaryota</taxon>
        <taxon>Viridiplantae</taxon>
        <taxon>Streptophyta</taxon>
        <taxon>Embryophyta</taxon>
        <taxon>Tracheophyta</taxon>
        <taxon>Spermatophyta</taxon>
        <taxon>Magnoliopsida</taxon>
        <taxon>eudicotyledons</taxon>
        <taxon>Gunneridae</taxon>
        <taxon>Pentapetalae</taxon>
        <taxon>rosids</taxon>
        <taxon>fabids</taxon>
        <taxon>Cucurbitales</taxon>
        <taxon>Cucurbitaceae</taxon>
        <taxon>Momordiceae</taxon>
        <taxon>Momordica</taxon>
    </lineage>
</organism>
<accession>P84072</accession>
<evidence type="ECO:0000269" key="1">
    <source>
    </source>
</evidence>
<evidence type="ECO:0000303" key="2">
    <source>
    </source>
</evidence>
<evidence type="ECO:0000305" key="3"/>
<dbReference type="EC" id="3.2.2.22"/>
<dbReference type="Proteomes" id="UP000504603">
    <property type="component" value="Unplaced"/>
</dbReference>
<dbReference type="GO" id="GO:0030598">
    <property type="term" value="F:rRNA N-glycosylase activity"/>
    <property type="evidence" value="ECO:0007669"/>
    <property type="project" value="UniProtKB-EC"/>
</dbReference>
<dbReference type="GO" id="GO:0090729">
    <property type="term" value="F:toxin activity"/>
    <property type="evidence" value="ECO:0007669"/>
    <property type="project" value="UniProtKB-KW"/>
</dbReference>
<dbReference type="GO" id="GO:0017148">
    <property type="term" value="P:negative regulation of translation"/>
    <property type="evidence" value="ECO:0007669"/>
    <property type="project" value="UniProtKB-KW"/>
</dbReference>
<proteinExistence type="evidence at protein level"/>
<reference evidence="3" key="1">
    <citation type="journal article" date="2002" name="J. Pept. Res.">
        <title>Purification and characterization of charantin, a napin-like ribosome-inactivating peptide from bitter gourd (Momordica charantia) seeds.</title>
        <authorList>
            <person name="Parkash A."/>
            <person name="Ng T.B."/>
            <person name="Tso W.W."/>
        </authorList>
    </citation>
    <scope>PROTEIN SEQUENCE</scope>
    <scope>FUNCTION</scope>
    <source>
        <tissue evidence="1">Seed</tissue>
    </source>
</reference>
<sequence length="25" mass="2905">LRNVEQQCRADALVERAQELIHGQQ</sequence>